<keyword id="KW-1003">Cell membrane</keyword>
<keyword id="KW-0472">Membrane</keyword>
<keyword id="KW-0571">Peptide transport</keyword>
<keyword id="KW-0653">Protein transport</keyword>
<keyword id="KW-1185">Reference proteome</keyword>
<keyword id="KW-0812">Transmembrane</keyword>
<keyword id="KW-1133">Transmembrane helix</keyword>
<keyword id="KW-0813">Transport</keyword>
<name>CSTA_MYCTO</name>
<feature type="chain" id="PRO_0000427015" description="Peptide transporter CstA">
    <location>
        <begin position="1"/>
        <end position="758"/>
    </location>
</feature>
<feature type="transmembrane region" description="Helical" evidence="2">
    <location>
        <begin position="42"/>
        <end position="62"/>
    </location>
</feature>
<feature type="transmembrane region" description="Helical" evidence="2">
    <location>
        <begin position="67"/>
        <end position="87"/>
    </location>
</feature>
<feature type="transmembrane region" description="Helical" evidence="2">
    <location>
        <begin position="122"/>
        <end position="142"/>
    </location>
</feature>
<feature type="transmembrane region" description="Helical" evidence="2">
    <location>
        <begin position="153"/>
        <end position="173"/>
    </location>
</feature>
<feature type="transmembrane region" description="Helical" evidence="2">
    <location>
        <begin position="198"/>
        <end position="218"/>
    </location>
</feature>
<feature type="transmembrane region" description="Helical" evidence="2">
    <location>
        <begin position="225"/>
        <end position="245"/>
    </location>
</feature>
<feature type="transmembrane region" description="Helical" evidence="2">
    <location>
        <begin position="256"/>
        <end position="276"/>
    </location>
</feature>
<feature type="transmembrane region" description="Helical" evidence="2">
    <location>
        <begin position="291"/>
        <end position="311"/>
    </location>
</feature>
<feature type="transmembrane region" description="Helical" evidence="2">
    <location>
        <begin position="320"/>
        <end position="340"/>
    </location>
</feature>
<feature type="transmembrane region" description="Helical" evidence="2">
    <location>
        <begin position="361"/>
        <end position="381"/>
    </location>
</feature>
<feature type="transmembrane region" description="Helical" evidence="2">
    <location>
        <begin position="401"/>
        <end position="421"/>
    </location>
</feature>
<feature type="transmembrane region" description="Helical" evidence="2">
    <location>
        <begin position="498"/>
        <end position="518"/>
    </location>
</feature>
<feature type="transmembrane region" description="Helical" evidence="2">
    <location>
        <begin position="561"/>
        <end position="581"/>
    </location>
</feature>
<feature type="transmembrane region" description="Helical" evidence="2">
    <location>
        <begin position="588"/>
        <end position="608"/>
    </location>
</feature>
<feature type="transmembrane region" description="Helical" evidence="2">
    <location>
        <begin position="615"/>
        <end position="635"/>
    </location>
</feature>
<feature type="transmembrane region" description="Helical" evidence="2">
    <location>
        <begin position="687"/>
        <end position="707"/>
    </location>
</feature>
<proteinExistence type="inferred from homology"/>
<comment type="function">
    <text evidence="1">Involved in peptide utilization.</text>
</comment>
<comment type="subcellular location">
    <subcellularLocation>
        <location evidence="3">Cell membrane</location>
        <topology evidence="2">Multi-pass membrane protein</topology>
    </subcellularLocation>
</comment>
<comment type="similarity">
    <text evidence="3">Belongs to the peptide transporter carbon starvation (CstA) (TC 2.A.114) family.</text>
</comment>
<evidence type="ECO:0000250" key="1">
    <source>
        <dbReference type="UniProtKB" id="P15078"/>
    </source>
</evidence>
<evidence type="ECO:0000255" key="2"/>
<evidence type="ECO:0000305" key="3"/>
<dbReference type="EMBL" id="AE000516">
    <property type="protein sequence ID" value="AAK47482.1"/>
    <property type="molecule type" value="Genomic_DNA"/>
</dbReference>
<dbReference type="PIR" id="H70649">
    <property type="entry name" value="H70649"/>
</dbReference>
<dbReference type="RefSeq" id="WP_003899901.1">
    <property type="nucleotide sequence ID" value="NZ_KK341227.1"/>
</dbReference>
<dbReference type="KEGG" id="mtc:MT3149"/>
<dbReference type="PATRIC" id="fig|83331.31.peg.3393"/>
<dbReference type="HOGENOM" id="CLU_010531_2_0_11"/>
<dbReference type="Proteomes" id="UP000001020">
    <property type="component" value="Chromosome"/>
</dbReference>
<dbReference type="GO" id="GO:0005886">
    <property type="term" value="C:plasma membrane"/>
    <property type="evidence" value="ECO:0007669"/>
    <property type="project" value="UniProtKB-SubCell"/>
</dbReference>
<dbReference type="GO" id="GO:0009267">
    <property type="term" value="P:cellular response to starvation"/>
    <property type="evidence" value="ECO:0007669"/>
    <property type="project" value="InterPro"/>
</dbReference>
<dbReference type="GO" id="GO:0015833">
    <property type="term" value="P:peptide transport"/>
    <property type="evidence" value="ECO:0007669"/>
    <property type="project" value="UniProtKB-KW"/>
</dbReference>
<dbReference type="GO" id="GO:0015031">
    <property type="term" value="P:protein transport"/>
    <property type="evidence" value="ECO:0007669"/>
    <property type="project" value="UniProtKB-KW"/>
</dbReference>
<dbReference type="InterPro" id="IPR051605">
    <property type="entry name" value="CstA"/>
</dbReference>
<dbReference type="InterPro" id="IPR003706">
    <property type="entry name" value="CstA_N"/>
</dbReference>
<dbReference type="PANTHER" id="PTHR30252">
    <property type="entry name" value="INNER MEMBRANE PEPTIDE TRANSPORTER"/>
    <property type="match status" value="1"/>
</dbReference>
<dbReference type="PANTHER" id="PTHR30252:SF3">
    <property type="entry name" value="PYRUVATE_PROTON SYMPORTER BTST"/>
    <property type="match status" value="1"/>
</dbReference>
<dbReference type="Pfam" id="PF02554">
    <property type="entry name" value="CstA"/>
    <property type="match status" value="1"/>
</dbReference>
<accession>P9WP46</accession>
<accession>L0TBQ3</accession>
<accession>P95095</accession>
<reference key="1">
    <citation type="journal article" date="2002" name="J. Bacteriol.">
        <title>Whole-genome comparison of Mycobacterium tuberculosis clinical and laboratory strains.</title>
        <authorList>
            <person name="Fleischmann R.D."/>
            <person name="Alland D."/>
            <person name="Eisen J.A."/>
            <person name="Carpenter L."/>
            <person name="White O."/>
            <person name="Peterson J.D."/>
            <person name="DeBoy R.T."/>
            <person name="Dodson R.J."/>
            <person name="Gwinn M.L."/>
            <person name="Haft D.H."/>
            <person name="Hickey E.K."/>
            <person name="Kolonay J.F."/>
            <person name="Nelson W.C."/>
            <person name="Umayam L.A."/>
            <person name="Ermolaeva M.D."/>
            <person name="Salzberg S.L."/>
            <person name="Delcher A."/>
            <person name="Utterback T.R."/>
            <person name="Weidman J.F."/>
            <person name="Khouri H.M."/>
            <person name="Gill J."/>
            <person name="Mikula A."/>
            <person name="Bishai W."/>
            <person name="Jacobs W.R. Jr."/>
            <person name="Venter J.C."/>
            <person name="Fraser C.M."/>
        </authorList>
    </citation>
    <scope>NUCLEOTIDE SEQUENCE [LARGE SCALE GENOMIC DNA]</scope>
    <source>
        <strain>CDC 1551 / Oshkosh</strain>
    </source>
</reference>
<gene>
    <name type="primary">cstA</name>
    <name type="ordered locus">MT3149</name>
</gene>
<protein>
    <recommendedName>
        <fullName evidence="3">Peptide transporter CstA</fullName>
    </recommendedName>
    <alternativeName>
        <fullName evidence="3">Carbon starvation protein A homolog</fullName>
    </alternativeName>
</protein>
<sequence>MAAPTPSNRIEERSGHASCVRADADLPPVAILGRSPITLRHKIFFVAVAVIGALAWTVVAFFRNEPVNAVWIVVAAGCTYIIGFRFYARLIEMKVVRPRDDHATPAEILDDGTDYVPTDRRVVFGHHFAAIAGAGPLVGPVLATQMGYLPSSIWIVVGAVLAGCVQDYLVLWISVRRRGRSLGQMVRDELGATAGVAALVGIPVIITIVIAVLALVVVRALAKSPWGVFSIAMTIPIAIFMGCYLRFLRPGRVSEVSLIGIGLLLLAVVSGDWVAHTSWGAAWFSLSPVTLCWLLISYGFAASVLPVWLLLAPRDYLSTFMKVGTIALLAIGVCAAHPIIEAPAVSKFAGSGNGPVFAGSLFPFLFITIACGALSGFDALICSGTTPKMLEKEGQMRVIGYGGMMTESFVAVIALLTAAILDQHLYFTLNAPSLHTHDSAATAAKYVNGLGLTGSPVTPDHISQAAASVGEQTIVSRTGGAPTLAFGMAEMLHRVVGGVGLKAFWYHFAIMFEALFILTTVDAGTRAARFMISDALGNFGGVLRKLQNPSWRPGAWACSLVVVAAWGSILLLGVTDPLGGINTLFPLFGIANQLLAGIALTVITVVVIKKGRLKWAWIPGIPLLWDLAVTLTASWQKIFSADPSVGYWTQHAHYAAAQHAGETAFGSATNADEINDVVRNTFVQGTLSIVFVVVVVLVVVAGVIVALKTIRGRGIPLAEDDPAPSTLFAPAGLIPTAAERKLQRRLGAPASASVAAPD</sequence>
<organism>
    <name type="scientific">Mycobacterium tuberculosis (strain CDC 1551 / Oshkosh)</name>
    <dbReference type="NCBI Taxonomy" id="83331"/>
    <lineage>
        <taxon>Bacteria</taxon>
        <taxon>Bacillati</taxon>
        <taxon>Actinomycetota</taxon>
        <taxon>Actinomycetes</taxon>
        <taxon>Mycobacteriales</taxon>
        <taxon>Mycobacteriaceae</taxon>
        <taxon>Mycobacterium</taxon>
        <taxon>Mycobacterium tuberculosis complex</taxon>
    </lineage>
</organism>